<reference key="1">
    <citation type="journal article" date="2007" name="PLoS ONE">
        <title>Analysis of the neurotoxin complex genes in Clostridium botulinum A1-A4 and B1 strains: BoNT/A3, /Ba4 and /B1 clusters are located within plasmids.</title>
        <authorList>
            <person name="Smith T.J."/>
            <person name="Hill K.K."/>
            <person name="Foley B.T."/>
            <person name="Detter J.C."/>
            <person name="Munk A.C."/>
            <person name="Bruce D.C."/>
            <person name="Doggett N.A."/>
            <person name="Smith L.A."/>
            <person name="Marks J.D."/>
            <person name="Xie G."/>
            <person name="Brettin T.S."/>
        </authorList>
    </citation>
    <scope>NUCLEOTIDE SEQUENCE [LARGE SCALE GENOMIC DNA]</scope>
    <source>
        <strain>Loch Maree / Type A3</strain>
    </source>
</reference>
<sequence length="498" mass="55393">MEKYIMSLDQGTTSSRCIIFNKKGEVVSVAQKEFTQIYPKAGWVEHDPLEIWGKQAGVAGEALNIARISPEQIAGIGITNQRETTVVWNKRTGMPVYNAIVWQCRRTAGYCDELREKGIDKTIKEKTGLMLDAYFSATKIKWILDNVEGARELAEKGDLLFGNIDTWLIWNMTKGKIHVTDYTNASRTMLFNIHELKWDEELLEILDIPKSMLPEVKPSSCVYGETDEILFGVSIPISGDAGDQQAALFGQTCFNAGMAKNTYGTGCFLLMNTGEKAVDSKNGLLTTIAVGIDGKVEYALEGSIFIGGAVIQWLRDELRMVKTAQETEKYATEVEDNNGVYLVPAFVGIGAPYWDSYARGTILGLTRGAKKEHIIRAALESMAYQTHDVLKAMEEDSGIELKALKVDGGACQNNFLMQFQSDILGVEVDRPEVVETTALGAAYLAGLAVGYWKDRNEISQNWAISRSFAPAMEDEKKEKLIKGWHKAVTKAMDWEERE</sequence>
<accession>B1KYK0</accession>
<feature type="chain" id="PRO_1000098727" description="Glycerol kinase">
    <location>
        <begin position="1"/>
        <end position="498"/>
    </location>
</feature>
<feature type="binding site" evidence="1">
    <location>
        <position position="12"/>
    </location>
    <ligand>
        <name>ADP</name>
        <dbReference type="ChEBI" id="CHEBI:456216"/>
    </ligand>
</feature>
<feature type="binding site" evidence="1">
    <location>
        <position position="12"/>
    </location>
    <ligand>
        <name>ATP</name>
        <dbReference type="ChEBI" id="CHEBI:30616"/>
    </ligand>
</feature>
<feature type="binding site" evidence="1">
    <location>
        <position position="12"/>
    </location>
    <ligand>
        <name>sn-glycerol 3-phosphate</name>
        <dbReference type="ChEBI" id="CHEBI:57597"/>
    </ligand>
</feature>
<feature type="binding site" evidence="1">
    <location>
        <position position="13"/>
    </location>
    <ligand>
        <name>ATP</name>
        <dbReference type="ChEBI" id="CHEBI:30616"/>
    </ligand>
</feature>
<feature type="binding site" evidence="1">
    <location>
        <position position="14"/>
    </location>
    <ligand>
        <name>ATP</name>
        <dbReference type="ChEBI" id="CHEBI:30616"/>
    </ligand>
</feature>
<feature type="binding site" evidence="1">
    <location>
        <position position="16"/>
    </location>
    <ligand>
        <name>ADP</name>
        <dbReference type="ChEBI" id="CHEBI:456216"/>
    </ligand>
</feature>
<feature type="binding site" evidence="1">
    <location>
        <position position="82"/>
    </location>
    <ligand>
        <name>glycerol</name>
        <dbReference type="ChEBI" id="CHEBI:17754"/>
    </ligand>
</feature>
<feature type="binding site" evidence="1">
    <location>
        <position position="82"/>
    </location>
    <ligand>
        <name>sn-glycerol 3-phosphate</name>
        <dbReference type="ChEBI" id="CHEBI:57597"/>
    </ligand>
</feature>
<feature type="binding site" evidence="1">
    <location>
        <position position="83"/>
    </location>
    <ligand>
        <name>glycerol</name>
        <dbReference type="ChEBI" id="CHEBI:17754"/>
    </ligand>
</feature>
<feature type="binding site" evidence="1">
    <location>
        <position position="83"/>
    </location>
    <ligand>
        <name>sn-glycerol 3-phosphate</name>
        <dbReference type="ChEBI" id="CHEBI:57597"/>
    </ligand>
</feature>
<feature type="binding site" evidence="1">
    <location>
        <position position="134"/>
    </location>
    <ligand>
        <name>glycerol</name>
        <dbReference type="ChEBI" id="CHEBI:17754"/>
    </ligand>
</feature>
<feature type="binding site" evidence="1">
    <location>
        <position position="134"/>
    </location>
    <ligand>
        <name>sn-glycerol 3-phosphate</name>
        <dbReference type="ChEBI" id="CHEBI:57597"/>
    </ligand>
</feature>
<feature type="binding site" evidence="1">
    <location>
        <position position="243"/>
    </location>
    <ligand>
        <name>glycerol</name>
        <dbReference type="ChEBI" id="CHEBI:17754"/>
    </ligand>
</feature>
<feature type="binding site" evidence="1">
    <location>
        <position position="243"/>
    </location>
    <ligand>
        <name>sn-glycerol 3-phosphate</name>
        <dbReference type="ChEBI" id="CHEBI:57597"/>
    </ligand>
</feature>
<feature type="binding site" evidence="1">
    <location>
        <position position="244"/>
    </location>
    <ligand>
        <name>glycerol</name>
        <dbReference type="ChEBI" id="CHEBI:17754"/>
    </ligand>
</feature>
<feature type="binding site" evidence="1">
    <location>
        <position position="265"/>
    </location>
    <ligand>
        <name>ADP</name>
        <dbReference type="ChEBI" id="CHEBI:456216"/>
    </ligand>
</feature>
<feature type="binding site" evidence="1">
    <location>
        <position position="265"/>
    </location>
    <ligand>
        <name>ATP</name>
        <dbReference type="ChEBI" id="CHEBI:30616"/>
    </ligand>
</feature>
<feature type="binding site" evidence="1">
    <location>
        <position position="308"/>
    </location>
    <ligand>
        <name>ADP</name>
        <dbReference type="ChEBI" id="CHEBI:456216"/>
    </ligand>
</feature>
<feature type="binding site" evidence="1">
    <location>
        <position position="308"/>
    </location>
    <ligand>
        <name>ATP</name>
        <dbReference type="ChEBI" id="CHEBI:30616"/>
    </ligand>
</feature>
<feature type="binding site" evidence="1">
    <location>
        <position position="312"/>
    </location>
    <ligand>
        <name>ATP</name>
        <dbReference type="ChEBI" id="CHEBI:30616"/>
    </ligand>
</feature>
<feature type="binding site" evidence="1">
    <location>
        <position position="409"/>
    </location>
    <ligand>
        <name>ADP</name>
        <dbReference type="ChEBI" id="CHEBI:456216"/>
    </ligand>
</feature>
<feature type="binding site" evidence="1">
    <location>
        <position position="409"/>
    </location>
    <ligand>
        <name>ATP</name>
        <dbReference type="ChEBI" id="CHEBI:30616"/>
    </ligand>
</feature>
<feature type="binding site" evidence="1">
    <location>
        <position position="413"/>
    </location>
    <ligand>
        <name>ADP</name>
        <dbReference type="ChEBI" id="CHEBI:456216"/>
    </ligand>
</feature>
<evidence type="ECO:0000255" key="1">
    <source>
        <dbReference type="HAMAP-Rule" id="MF_00186"/>
    </source>
</evidence>
<organism>
    <name type="scientific">Clostridium botulinum (strain Loch Maree / Type A3)</name>
    <dbReference type="NCBI Taxonomy" id="498214"/>
    <lineage>
        <taxon>Bacteria</taxon>
        <taxon>Bacillati</taxon>
        <taxon>Bacillota</taxon>
        <taxon>Clostridia</taxon>
        <taxon>Eubacteriales</taxon>
        <taxon>Clostridiaceae</taxon>
        <taxon>Clostridium</taxon>
    </lineage>
</organism>
<name>GLPK_CLOBM</name>
<keyword id="KW-0067">ATP-binding</keyword>
<keyword id="KW-0319">Glycerol metabolism</keyword>
<keyword id="KW-0418">Kinase</keyword>
<keyword id="KW-0547">Nucleotide-binding</keyword>
<keyword id="KW-0808">Transferase</keyword>
<comment type="function">
    <text evidence="1">Key enzyme in the regulation of glycerol uptake and metabolism. Catalyzes the phosphorylation of glycerol to yield sn-glycerol 3-phosphate.</text>
</comment>
<comment type="catalytic activity">
    <reaction evidence="1">
        <text>glycerol + ATP = sn-glycerol 3-phosphate + ADP + H(+)</text>
        <dbReference type="Rhea" id="RHEA:21644"/>
        <dbReference type="ChEBI" id="CHEBI:15378"/>
        <dbReference type="ChEBI" id="CHEBI:17754"/>
        <dbReference type="ChEBI" id="CHEBI:30616"/>
        <dbReference type="ChEBI" id="CHEBI:57597"/>
        <dbReference type="ChEBI" id="CHEBI:456216"/>
        <dbReference type="EC" id="2.7.1.30"/>
    </reaction>
</comment>
<comment type="activity regulation">
    <text evidence="1">Activated by phosphorylation and inhibited by fructose 1,6-bisphosphate (FBP).</text>
</comment>
<comment type="pathway">
    <text evidence="1">Polyol metabolism; glycerol degradation via glycerol kinase pathway; sn-glycerol 3-phosphate from glycerol: step 1/1.</text>
</comment>
<comment type="subunit">
    <text evidence="1">Homotetramer and homodimer (in equilibrium).</text>
</comment>
<comment type="similarity">
    <text evidence="1">Belongs to the FGGY kinase family.</text>
</comment>
<proteinExistence type="inferred from homology"/>
<gene>
    <name evidence="1" type="primary">glpK</name>
    <name type="ordered locus">CLK_2169</name>
</gene>
<dbReference type="EC" id="2.7.1.30" evidence="1"/>
<dbReference type="EMBL" id="CP000962">
    <property type="protein sequence ID" value="ACA53675.1"/>
    <property type="molecule type" value="Genomic_DNA"/>
</dbReference>
<dbReference type="RefSeq" id="WP_012341873.1">
    <property type="nucleotide sequence ID" value="NC_010520.1"/>
</dbReference>
<dbReference type="SMR" id="B1KYK0"/>
<dbReference type="KEGG" id="cbl:CLK_2169"/>
<dbReference type="HOGENOM" id="CLU_009281_2_3_9"/>
<dbReference type="UniPathway" id="UPA00618">
    <property type="reaction ID" value="UER00672"/>
</dbReference>
<dbReference type="GO" id="GO:0005829">
    <property type="term" value="C:cytosol"/>
    <property type="evidence" value="ECO:0007669"/>
    <property type="project" value="TreeGrafter"/>
</dbReference>
<dbReference type="GO" id="GO:0005524">
    <property type="term" value="F:ATP binding"/>
    <property type="evidence" value="ECO:0007669"/>
    <property type="project" value="UniProtKB-UniRule"/>
</dbReference>
<dbReference type="GO" id="GO:0004370">
    <property type="term" value="F:glycerol kinase activity"/>
    <property type="evidence" value="ECO:0000250"/>
    <property type="project" value="UniProtKB"/>
</dbReference>
<dbReference type="GO" id="GO:0019563">
    <property type="term" value="P:glycerol catabolic process"/>
    <property type="evidence" value="ECO:0007669"/>
    <property type="project" value="UniProtKB-UniRule"/>
</dbReference>
<dbReference type="GO" id="GO:0006071">
    <property type="term" value="P:glycerol metabolic process"/>
    <property type="evidence" value="ECO:0000250"/>
    <property type="project" value="UniProtKB"/>
</dbReference>
<dbReference type="GO" id="GO:0006072">
    <property type="term" value="P:glycerol-3-phosphate metabolic process"/>
    <property type="evidence" value="ECO:0007669"/>
    <property type="project" value="InterPro"/>
</dbReference>
<dbReference type="CDD" id="cd07786">
    <property type="entry name" value="FGGY_EcGK_like"/>
    <property type="match status" value="1"/>
</dbReference>
<dbReference type="FunFam" id="3.30.420.40:FF:000007">
    <property type="entry name" value="Glycerol kinase"/>
    <property type="match status" value="1"/>
</dbReference>
<dbReference type="FunFam" id="3.30.420.40:FF:000008">
    <property type="entry name" value="Glycerol kinase"/>
    <property type="match status" value="1"/>
</dbReference>
<dbReference type="Gene3D" id="3.30.420.40">
    <property type="match status" value="2"/>
</dbReference>
<dbReference type="HAMAP" id="MF_00186">
    <property type="entry name" value="Glycerol_kin"/>
    <property type="match status" value="1"/>
</dbReference>
<dbReference type="InterPro" id="IPR043129">
    <property type="entry name" value="ATPase_NBD"/>
</dbReference>
<dbReference type="InterPro" id="IPR000577">
    <property type="entry name" value="Carb_kinase_FGGY"/>
</dbReference>
<dbReference type="InterPro" id="IPR018483">
    <property type="entry name" value="Carb_kinase_FGGY_CS"/>
</dbReference>
<dbReference type="InterPro" id="IPR018485">
    <property type="entry name" value="FGGY_C"/>
</dbReference>
<dbReference type="InterPro" id="IPR018484">
    <property type="entry name" value="FGGY_N"/>
</dbReference>
<dbReference type="InterPro" id="IPR005999">
    <property type="entry name" value="Glycerol_kin"/>
</dbReference>
<dbReference type="NCBIfam" id="TIGR01311">
    <property type="entry name" value="glycerol_kin"/>
    <property type="match status" value="1"/>
</dbReference>
<dbReference type="NCBIfam" id="NF000756">
    <property type="entry name" value="PRK00047.1"/>
    <property type="match status" value="1"/>
</dbReference>
<dbReference type="PANTHER" id="PTHR10196:SF69">
    <property type="entry name" value="GLYCEROL KINASE"/>
    <property type="match status" value="1"/>
</dbReference>
<dbReference type="PANTHER" id="PTHR10196">
    <property type="entry name" value="SUGAR KINASE"/>
    <property type="match status" value="1"/>
</dbReference>
<dbReference type="Pfam" id="PF02782">
    <property type="entry name" value="FGGY_C"/>
    <property type="match status" value="1"/>
</dbReference>
<dbReference type="Pfam" id="PF00370">
    <property type="entry name" value="FGGY_N"/>
    <property type="match status" value="1"/>
</dbReference>
<dbReference type="PIRSF" id="PIRSF000538">
    <property type="entry name" value="GlpK"/>
    <property type="match status" value="1"/>
</dbReference>
<dbReference type="SUPFAM" id="SSF53067">
    <property type="entry name" value="Actin-like ATPase domain"/>
    <property type="match status" value="2"/>
</dbReference>
<dbReference type="PROSITE" id="PS00933">
    <property type="entry name" value="FGGY_KINASES_1"/>
    <property type="match status" value="1"/>
</dbReference>
<dbReference type="PROSITE" id="PS00445">
    <property type="entry name" value="FGGY_KINASES_2"/>
    <property type="match status" value="1"/>
</dbReference>
<protein>
    <recommendedName>
        <fullName evidence="1">Glycerol kinase</fullName>
        <ecNumber evidence="1">2.7.1.30</ecNumber>
    </recommendedName>
    <alternativeName>
        <fullName evidence="1">ATP:glycerol 3-phosphotransferase</fullName>
    </alternativeName>
    <alternativeName>
        <fullName evidence="1">Glycerokinase</fullName>
        <shortName evidence="1">GK</shortName>
    </alternativeName>
</protein>